<comment type="similarity">
    <text evidence="1">Belongs to the DNA glycosylase MPG family.</text>
</comment>
<accession>Q24R48</accession>
<feature type="chain" id="PRO_0000265015" description="Putative 3-methyladenine DNA glycosylase">
    <location>
        <begin position="1"/>
        <end position="203"/>
    </location>
</feature>
<reference key="1">
    <citation type="journal article" date="2006" name="J. Bacteriol.">
        <title>Complete genome sequence of the dehalorespiring bacterium Desulfitobacterium hafniense Y51 and comparison with Dehalococcoides ethenogenes 195.</title>
        <authorList>
            <person name="Nonaka H."/>
            <person name="Keresztes G."/>
            <person name="Shinoda Y."/>
            <person name="Ikenaga Y."/>
            <person name="Abe M."/>
            <person name="Naito K."/>
            <person name="Inatomi K."/>
            <person name="Furukawa K."/>
            <person name="Inui M."/>
            <person name="Yukawa H."/>
        </authorList>
    </citation>
    <scope>NUCLEOTIDE SEQUENCE [LARGE SCALE GENOMIC DNA]</scope>
    <source>
        <strain>Y51</strain>
    </source>
</reference>
<evidence type="ECO:0000255" key="1">
    <source>
        <dbReference type="HAMAP-Rule" id="MF_00527"/>
    </source>
</evidence>
<dbReference type="EC" id="3.2.2.-" evidence="1"/>
<dbReference type="EMBL" id="AP008230">
    <property type="protein sequence ID" value="BAE85494.1"/>
    <property type="molecule type" value="Genomic_DNA"/>
</dbReference>
<dbReference type="SMR" id="Q24R48"/>
<dbReference type="STRING" id="138119.DSY3705"/>
<dbReference type="KEGG" id="dsy:DSY3705"/>
<dbReference type="eggNOG" id="COG2094">
    <property type="taxonomic scope" value="Bacteria"/>
</dbReference>
<dbReference type="HOGENOM" id="CLU_060471_0_2_9"/>
<dbReference type="Proteomes" id="UP000001946">
    <property type="component" value="Chromosome"/>
</dbReference>
<dbReference type="GO" id="GO:0003905">
    <property type="term" value="F:alkylbase DNA N-glycosylase activity"/>
    <property type="evidence" value="ECO:0007669"/>
    <property type="project" value="InterPro"/>
</dbReference>
<dbReference type="GO" id="GO:0003677">
    <property type="term" value="F:DNA binding"/>
    <property type="evidence" value="ECO:0007669"/>
    <property type="project" value="InterPro"/>
</dbReference>
<dbReference type="GO" id="GO:0006284">
    <property type="term" value="P:base-excision repair"/>
    <property type="evidence" value="ECO:0007669"/>
    <property type="project" value="InterPro"/>
</dbReference>
<dbReference type="CDD" id="cd00540">
    <property type="entry name" value="AAG"/>
    <property type="match status" value="1"/>
</dbReference>
<dbReference type="FunFam" id="3.10.300.10:FF:000001">
    <property type="entry name" value="Putative 3-methyladenine DNA glycosylase"/>
    <property type="match status" value="1"/>
</dbReference>
<dbReference type="Gene3D" id="3.10.300.10">
    <property type="entry name" value="Methylpurine-DNA glycosylase (MPG)"/>
    <property type="match status" value="1"/>
</dbReference>
<dbReference type="HAMAP" id="MF_00527">
    <property type="entry name" value="3MGH"/>
    <property type="match status" value="1"/>
</dbReference>
<dbReference type="InterPro" id="IPR011034">
    <property type="entry name" value="Formyl_transferase-like_C_sf"/>
</dbReference>
<dbReference type="InterPro" id="IPR003180">
    <property type="entry name" value="MPG"/>
</dbReference>
<dbReference type="InterPro" id="IPR036995">
    <property type="entry name" value="MPG_sf"/>
</dbReference>
<dbReference type="NCBIfam" id="TIGR00567">
    <property type="entry name" value="3mg"/>
    <property type="match status" value="1"/>
</dbReference>
<dbReference type="NCBIfam" id="NF002001">
    <property type="entry name" value="PRK00802.1-1"/>
    <property type="match status" value="1"/>
</dbReference>
<dbReference type="NCBIfam" id="NF002003">
    <property type="entry name" value="PRK00802.1-3"/>
    <property type="match status" value="1"/>
</dbReference>
<dbReference type="PANTHER" id="PTHR10429">
    <property type="entry name" value="DNA-3-METHYLADENINE GLYCOSYLASE"/>
    <property type="match status" value="1"/>
</dbReference>
<dbReference type="PANTHER" id="PTHR10429:SF0">
    <property type="entry name" value="DNA-3-METHYLADENINE GLYCOSYLASE"/>
    <property type="match status" value="1"/>
</dbReference>
<dbReference type="Pfam" id="PF02245">
    <property type="entry name" value="Pur_DNA_glyco"/>
    <property type="match status" value="1"/>
</dbReference>
<dbReference type="SUPFAM" id="SSF50486">
    <property type="entry name" value="FMT C-terminal domain-like"/>
    <property type="match status" value="1"/>
</dbReference>
<keyword id="KW-0227">DNA damage</keyword>
<keyword id="KW-0234">DNA repair</keyword>
<keyword id="KW-0378">Hydrolase</keyword>
<keyword id="KW-1185">Reference proteome</keyword>
<gene>
    <name type="ordered locus">DSY3705</name>
</gene>
<proteinExistence type="inferred from homology"/>
<sequence length="203" mass="22969">MKRLGREFYNRDSLIVARELLGKVLVHEIEGQKVSARIVETEAYRGIEDKAAHSYGGKRTPRVEVMYGGPGFSYVFIVYGMHYCFNVVTREEGNPQAVLIRAAEPREGSELMAQNRFKKSYHQLNKSQILGLTNGPGKLCRALSIDKSLNGEDLCGSKLYVAEESQESLSIVTAKRVGIDYAEEAKDYPWRFYLEDSQYVSVK</sequence>
<organism>
    <name type="scientific">Desulfitobacterium hafniense (strain Y51)</name>
    <dbReference type="NCBI Taxonomy" id="138119"/>
    <lineage>
        <taxon>Bacteria</taxon>
        <taxon>Bacillati</taxon>
        <taxon>Bacillota</taxon>
        <taxon>Clostridia</taxon>
        <taxon>Eubacteriales</taxon>
        <taxon>Desulfitobacteriaceae</taxon>
        <taxon>Desulfitobacterium</taxon>
    </lineage>
</organism>
<name>3MGH_DESHY</name>
<protein>
    <recommendedName>
        <fullName evidence="1">Putative 3-methyladenine DNA glycosylase</fullName>
        <ecNumber evidence="1">3.2.2.-</ecNumber>
    </recommendedName>
</protein>